<sequence length="428" mass="48700">MYKEPFQPTYEYALECDKHDELKDFQSEFYKKEGTIYLDGNSLGLLSKRAEKSLLTLLDSWKEFGIDGWTEGEHPWFFLSEKLGELTAPLIGSLPEETIVTSSTTANIHQVIATFYEPKGIRTKILADELTFPSDIYALQSQIRLKGLDPDEHLVRVKSRDGRTLSEDDIIHAMTDDIALILLPSVLYRSGQILDMKRLTAEAHKRGIHIGFDLCHSIGSIPHHFKEWDVDFAVWCNYKYLNAGPGGVAGLYVNNKHFNRLPGLSGWFSSRKDKQFDMEHSLTAADHAGAYQIGTPHVLSTAPLIGSLEIFKEAGIEKLREKSLHITRYMLDLIEHELKGFEFTIGNPLEDEKRGGHIYLEHAEAARICKALKANGVIPDFRAPNGVRLAPVALYNTYEEVWNYVQILKKIMKNEEYKNFENKREVVA</sequence>
<protein>
    <recommendedName>
        <fullName evidence="1">Kynureninase</fullName>
        <ecNumber evidence="1">3.7.1.3</ecNumber>
    </recommendedName>
    <alternativeName>
        <fullName evidence="1">L-kynurenine hydrolase</fullName>
    </alternativeName>
</protein>
<organism>
    <name type="scientific">Bacillus mycoides (strain KBAB4)</name>
    <name type="common">Bacillus weihenstephanensis</name>
    <dbReference type="NCBI Taxonomy" id="315730"/>
    <lineage>
        <taxon>Bacteria</taxon>
        <taxon>Bacillati</taxon>
        <taxon>Bacillota</taxon>
        <taxon>Bacilli</taxon>
        <taxon>Bacillales</taxon>
        <taxon>Bacillaceae</taxon>
        <taxon>Bacillus</taxon>
        <taxon>Bacillus cereus group</taxon>
    </lineage>
</organism>
<reference key="1">
    <citation type="journal article" date="2008" name="Chem. Biol. Interact.">
        <title>Extending the Bacillus cereus group genomics to putative food-borne pathogens of different toxicity.</title>
        <authorList>
            <person name="Lapidus A."/>
            <person name="Goltsman E."/>
            <person name="Auger S."/>
            <person name="Galleron N."/>
            <person name="Segurens B."/>
            <person name="Dossat C."/>
            <person name="Land M.L."/>
            <person name="Broussolle V."/>
            <person name="Brillard J."/>
            <person name="Guinebretiere M.-H."/>
            <person name="Sanchis V."/>
            <person name="Nguen-the C."/>
            <person name="Lereclus D."/>
            <person name="Richardson P."/>
            <person name="Wincker P."/>
            <person name="Weissenbach J."/>
            <person name="Ehrlich S.D."/>
            <person name="Sorokin A."/>
        </authorList>
    </citation>
    <scope>NUCLEOTIDE SEQUENCE [LARGE SCALE GENOMIC DNA]</scope>
    <source>
        <strain>KBAB4</strain>
    </source>
</reference>
<keyword id="KW-0378">Hydrolase</keyword>
<keyword id="KW-0662">Pyridine nucleotide biosynthesis</keyword>
<keyword id="KW-0663">Pyridoxal phosphate</keyword>
<comment type="function">
    <text evidence="1">Catalyzes the cleavage of L-kynurenine (L-Kyn) and L-3-hydroxykynurenine (L-3OHKyn) into anthranilic acid (AA) and 3-hydroxyanthranilic acid (3-OHAA), respectively.</text>
</comment>
<comment type="catalytic activity">
    <reaction evidence="1">
        <text>L-kynurenine + H2O = anthranilate + L-alanine + H(+)</text>
        <dbReference type="Rhea" id="RHEA:16813"/>
        <dbReference type="ChEBI" id="CHEBI:15377"/>
        <dbReference type="ChEBI" id="CHEBI:15378"/>
        <dbReference type="ChEBI" id="CHEBI:16567"/>
        <dbReference type="ChEBI" id="CHEBI:57959"/>
        <dbReference type="ChEBI" id="CHEBI:57972"/>
        <dbReference type="EC" id="3.7.1.3"/>
    </reaction>
</comment>
<comment type="catalytic activity">
    <reaction evidence="1">
        <text>3-hydroxy-L-kynurenine + H2O = 3-hydroxyanthranilate + L-alanine + H(+)</text>
        <dbReference type="Rhea" id="RHEA:25143"/>
        <dbReference type="ChEBI" id="CHEBI:15377"/>
        <dbReference type="ChEBI" id="CHEBI:15378"/>
        <dbReference type="ChEBI" id="CHEBI:36559"/>
        <dbReference type="ChEBI" id="CHEBI:57972"/>
        <dbReference type="ChEBI" id="CHEBI:58125"/>
        <dbReference type="EC" id="3.7.1.3"/>
    </reaction>
</comment>
<comment type="cofactor">
    <cofactor evidence="1">
        <name>pyridoxal 5'-phosphate</name>
        <dbReference type="ChEBI" id="CHEBI:597326"/>
    </cofactor>
</comment>
<comment type="pathway">
    <text evidence="1">Amino-acid degradation; L-kynurenine degradation; L-alanine and anthranilate from L-kynurenine: step 1/1.</text>
</comment>
<comment type="pathway">
    <text evidence="1">Cofactor biosynthesis; NAD(+) biosynthesis; quinolinate from L-kynurenine: step 2/3.</text>
</comment>
<comment type="subunit">
    <text evidence="1">Homodimer.</text>
</comment>
<comment type="similarity">
    <text evidence="1">Belongs to the kynureninase family.</text>
</comment>
<gene>
    <name evidence="1" type="primary">kynU</name>
    <name type="ordered locus">BcerKBAB4_2559</name>
</gene>
<proteinExistence type="inferred from homology"/>
<evidence type="ECO:0000255" key="1">
    <source>
        <dbReference type="HAMAP-Rule" id="MF_01970"/>
    </source>
</evidence>
<name>KYNU_BACMK</name>
<feature type="chain" id="PRO_0000356994" description="Kynureninase">
    <location>
        <begin position="1"/>
        <end position="428"/>
    </location>
</feature>
<feature type="binding site" evidence="1">
    <location>
        <position position="104"/>
    </location>
    <ligand>
        <name>pyridoxal 5'-phosphate</name>
        <dbReference type="ChEBI" id="CHEBI:597326"/>
    </ligand>
</feature>
<feature type="binding site" evidence="1">
    <location>
        <position position="105"/>
    </location>
    <ligand>
        <name>pyridoxal 5'-phosphate</name>
        <dbReference type="ChEBI" id="CHEBI:597326"/>
    </ligand>
</feature>
<feature type="binding site" evidence="1">
    <location>
        <begin position="132"/>
        <end position="135"/>
    </location>
    <ligand>
        <name>pyridoxal 5'-phosphate</name>
        <dbReference type="ChEBI" id="CHEBI:597326"/>
    </ligand>
</feature>
<feature type="binding site" evidence="1">
    <location>
        <position position="213"/>
    </location>
    <ligand>
        <name>pyridoxal 5'-phosphate</name>
        <dbReference type="ChEBI" id="CHEBI:597326"/>
    </ligand>
</feature>
<feature type="binding site" evidence="1">
    <location>
        <position position="216"/>
    </location>
    <ligand>
        <name>pyridoxal 5'-phosphate</name>
        <dbReference type="ChEBI" id="CHEBI:597326"/>
    </ligand>
</feature>
<feature type="binding site" evidence="1">
    <location>
        <position position="238"/>
    </location>
    <ligand>
        <name>pyridoxal 5'-phosphate</name>
        <dbReference type="ChEBI" id="CHEBI:597326"/>
    </ligand>
</feature>
<feature type="binding site" evidence="1">
    <location>
        <position position="267"/>
    </location>
    <ligand>
        <name>pyridoxal 5'-phosphate</name>
        <dbReference type="ChEBI" id="CHEBI:597326"/>
    </ligand>
</feature>
<feature type="binding site" evidence="1">
    <location>
        <position position="295"/>
    </location>
    <ligand>
        <name>pyridoxal 5'-phosphate</name>
        <dbReference type="ChEBI" id="CHEBI:597326"/>
    </ligand>
</feature>
<feature type="modified residue" description="N6-(pyridoxal phosphate)lysine" evidence="1">
    <location>
        <position position="239"/>
    </location>
</feature>
<dbReference type="EC" id="3.7.1.3" evidence="1"/>
<dbReference type="EMBL" id="CP000903">
    <property type="protein sequence ID" value="ABY43763.1"/>
    <property type="molecule type" value="Genomic_DNA"/>
</dbReference>
<dbReference type="RefSeq" id="WP_012261053.1">
    <property type="nucleotide sequence ID" value="NC_010184.1"/>
</dbReference>
<dbReference type="SMR" id="A9VHP9"/>
<dbReference type="KEGG" id="bwe:BcerKBAB4_2559"/>
<dbReference type="eggNOG" id="COG3844">
    <property type="taxonomic scope" value="Bacteria"/>
</dbReference>
<dbReference type="HOGENOM" id="CLU_003433_4_0_9"/>
<dbReference type="UniPathway" id="UPA00253">
    <property type="reaction ID" value="UER00329"/>
</dbReference>
<dbReference type="UniPathway" id="UPA00334">
    <property type="reaction ID" value="UER00455"/>
</dbReference>
<dbReference type="Proteomes" id="UP000002154">
    <property type="component" value="Chromosome"/>
</dbReference>
<dbReference type="GO" id="GO:0005737">
    <property type="term" value="C:cytoplasm"/>
    <property type="evidence" value="ECO:0007669"/>
    <property type="project" value="InterPro"/>
</dbReference>
<dbReference type="GO" id="GO:0030429">
    <property type="term" value="F:kynureninase activity"/>
    <property type="evidence" value="ECO:0007669"/>
    <property type="project" value="UniProtKB-UniRule"/>
</dbReference>
<dbReference type="GO" id="GO:0030170">
    <property type="term" value="F:pyridoxal phosphate binding"/>
    <property type="evidence" value="ECO:0007669"/>
    <property type="project" value="UniProtKB-UniRule"/>
</dbReference>
<dbReference type="GO" id="GO:0043420">
    <property type="term" value="P:anthranilate metabolic process"/>
    <property type="evidence" value="ECO:0007669"/>
    <property type="project" value="TreeGrafter"/>
</dbReference>
<dbReference type="GO" id="GO:0097053">
    <property type="term" value="P:L-kynurenine catabolic process"/>
    <property type="evidence" value="ECO:0007669"/>
    <property type="project" value="UniProtKB-UniRule"/>
</dbReference>
<dbReference type="GO" id="GO:0019441">
    <property type="term" value="P:L-tryptophan catabolic process to kynurenine"/>
    <property type="evidence" value="ECO:0007669"/>
    <property type="project" value="TreeGrafter"/>
</dbReference>
<dbReference type="GO" id="GO:0009435">
    <property type="term" value="P:NAD biosynthetic process"/>
    <property type="evidence" value="ECO:0007669"/>
    <property type="project" value="UniProtKB-UniPathway"/>
</dbReference>
<dbReference type="GO" id="GO:0019805">
    <property type="term" value="P:quinolinate biosynthetic process"/>
    <property type="evidence" value="ECO:0007669"/>
    <property type="project" value="UniProtKB-UniRule"/>
</dbReference>
<dbReference type="Gene3D" id="3.90.1150.10">
    <property type="entry name" value="Aspartate Aminotransferase, domain 1"/>
    <property type="match status" value="1"/>
</dbReference>
<dbReference type="Gene3D" id="3.40.640.10">
    <property type="entry name" value="Type I PLP-dependent aspartate aminotransferase-like (Major domain)"/>
    <property type="match status" value="1"/>
</dbReference>
<dbReference type="HAMAP" id="MF_01970">
    <property type="entry name" value="Kynureninase"/>
    <property type="match status" value="1"/>
</dbReference>
<dbReference type="InterPro" id="IPR010111">
    <property type="entry name" value="Kynureninase"/>
</dbReference>
<dbReference type="InterPro" id="IPR015424">
    <property type="entry name" value="PyrdxlP-dep_Trfase"/>
</dbReference>
<dbReference type="InterPro" id="IPR015421">
    <property type="entry name" value="PyrdxlP-dep_Trfase_major"/>
</dbReference>
<dbReference type="InterPro" id="IPR015422">
    <property type="entry name" value="PyrdxlP-dep_Trfase_small"/>
</dbReference>
<dbReference type="NCBIfam" id="TIGR01814">
    <property type="entry name" value="kynureninase"/>
    <property type="match status" value="1"/>
</dbReference>
<dbReference type="PANTHER" id="PTHR14084">
    <property type="entry name" value="KYNURENINASE"/>
    <property type="match status" value="1"/>
</dbReference>
<dbReference type="PANTHER" id="PTHR14084:SF0">
    <property type="entry name" value="KYNURENINASE"/>
    <property type="match status" value="1"/>
</dbReference>
<dbReference type="Pfam" id="PF22580">
    <property type="entry name" value="KYNU_C"/>
    <property type="match status" value="1"/>
</dbReference>
<dbReference type="PIRSF" id="PIRSF038800">
    <property type="entry name" value="KYNU"/>
    <property type="match status" value="1"/>
</dbReference>
<dbReference type="SUPFAM" id="SSF53383">
    <property type="entry name" value="PLP-dependent transferases"/>
    <property type="match status" value="1"/>
</dbReference>
<accession>A9VHP9</accession>